<protein>
    <recommendedName>
        <fullName evidence="1">Adenylate kinase</fullName>
        <shortName evidence="1">AK</shortName>
        <ecNumber evidence="1">2.7.4.3</ecNumber>
    </recommendedName>
    <alternativeName>
        <fullName evidence="1">ATP-AMP transphosphorylase</fullName>
    </alternativeName>
    <alternativeName>
        <fullName evidence="1">ATP:AMP phosphotransferase</fullName>
    </alternativeName>
    <alternativeName>
        <fullName evidence="1">Adenylate monophosphate kinase</fullName>
    </alternativeName>
</protein>
<organism>
    <name type="scientific">Bacillus mycoides (strain KBAB4)</name>
    <name type="common">Bacillus weihenstephanensis</name>
    <dbReference type="NCBI Taxonomy" id="315730"/>
    <lineage>
        <taxon>Bacteria</taxon>
        <taxon>Bacillati</taxon>
        <taxon>Bacillota</taxon>
        <taxon>Bacilli</taxon>
        <taxon>Bacillales</taxon>
        <taxon>Bacillaceae</taxon>
        <taxon>Bacillus</taxon>
        <taxon>Bacillus cereus group</taxon>
    </lineage>
</organism>
<sequence>MNLILMGLPGAGKGTQAEQIVAKYNIPHISTGDMFRAAMKAETELGLQAKSFIDKGALVPDEVTIGIVRERLSQEDCIKGFLLDGFPRTVAQASALEEIMKDLGKKIDYVLNINVDSGLLLTRLTGRRICKECGATYHLEFNPPAKADVCDKCGGELYQRSDDNEETVANRLDVNIKQTKPLLDFYEELGYLQSINGEQDINKVFADIDVLIGGLA</sequence>
<evidence type="ECO:0000255" key="1">
    <source>
        <dbReference type="HAMAP-Rule" id="MF_00235"/>
    </source>
</evidence>
<proteinExistence type="inferred from homology"/>
<name>KAD_BACMK</name>
<accession>A9VP98</accession>
<dbReference type="EC" id="2.7.4.3" evidence="1"/>
<dbReference type="EMBL" id="CP000903">
    <property type="protein sequence ID" value="ABY41395.1"/>
    <property type="molecule type" value="Genomic_DNA"/>
</dbReference>
<dbReference type="RefSeq" id="WP_002063428.1">
    <property type="nucleotide sequence ID" value="NC_010184.1"/>
</dbReference>
<dbReference type="SMR" id="A9VP98"/>
<dbReference type="KEGG" id="bwe:BcerKBAB4_0126"/>
<dbReference type="eggNOG" id="COG0563">
    <property type="taxonomic scope" value="Bacteria"/>
</dbReference>
<dbReference type="HOGENOM" id="CLU_032354_1_2_9"/>
<dbReference type="UniPathway" id="UPA00588">
    <property type="reaction ID" value="UER00649"/>
</dbReference>
<dbReference type="Proteomes" id="UP000002154">
    <property type="component" value="Chromosome"/>
</dbReference>
<dbReference type="GO" id="GO:0005737">
    <property type="term" value="C:cytoplasm"/>
    <property type="evidence" value="ECO:0007669"/>
    <property type="project" value="UniProtKB-SubCell"/>
</dbReference>
<dbReference type="GO" id="GO:0004017">
    <property type="term" value="F:adenylate kinase activity"/>
    <property type="evidence" value="ECO:0007669"/>
    <property type="project" value="UniProtKB-UniRule"/>
</dbReference>
<dbReference type="GO" id="GO:0005524">
    <property type="term" value="F:ATP binding"/>
    <property type="evidence" value="ECO:0007669"/>
    <property type="project" value="UniProtKB-UniRule"/>
</dbReference>
<dbReference type="GO" id="GO:0008270">
    <property type="term" value="F:zinc ion binding"/>
    <property type="evidence" value="ECO:0007669"/>
    <property type="project" value="UniProtKB-UniRule"/>
</dbReference>
<dbReference type="GO" id="GO:0044209">
    <property type="term" value="P:AMP salvage"/>
    <property type="evidence" value="ECO:0007669"/>
    <property type="project" value="UniProtKB-UniRule"/>
</dbReference>
<dbReference type="CDD" id="cd01428">
    <property type="entry name" value="ADK"/>
    <property type="match status" value="1"/>
</dbReference>
<dbReference type="FunFam" id="3.40.50.300:FF:000106">
    <property type="entry name" value="Adenylate kinase mitochondrial"/>
    <property type="match status" value="1"/>
</dbReference>
<dbReference type="Gene3D" id="3.40.50.300">
    <property type="entry name" value="P-loop containing nucleotide triphosphate hydrolases"/>
    <property type="match status" value="1"/>
</dbReference>
<dbReference type="HAMAP" id="MF_00235">
    <property type="entry name" value="Adenylate_kinase_Adk"/>
    <property type="match status" value="1"/>
</dbReference>
<dbReference type="InterPro" id="IPR006259">
    <property type="entry name" value="Adenyl_kin_sub"/>
</dbReference>
<dbReference type="InterPro" id="IPR000850">
    <property type="entry name" value="Adenylat/UMP-CMP_kin"/>
</dbReference>
<dbReference type="InterPro" id="IPR033690">
    <property type="entry name" value="Adenylat_kinase_CS"/>
</dbReference>
<dbReference type="InterPro" id="IPR007862">
    <property type="entry name" value="Adenylate_kinase_lid-dom"/>
</dbReference>
<dbReference type="InterPro" id="IPR027417">
    <property type="entry name" value="P-loop_NTPase"/>
</dbReference>
<dbReference type="NCBIfam" id="TIGR01351">
    <property type="entry name" value="adk"/>
    <property type="match status" value="1"/>
</dbReference>
<dbReference type="NCBIfam" id="NF001380">
    <property type="entry name" value="PRK00279.1-2"/>
    <property type="match status" value="1"/>
</dbReference>
<dbReference type="NCBIfam" id="NF001381">
    <property type="entry name" value="PRK00279.1-3"/>
    <property type="match status" value="1"/>
</dbReference>
<dbReference type="NCBIfam" id="NF011100">
    <property type="entry name" value="PRK14527.1"/>
    <property type="match status" value="1"/>
</dbReference>
<dbReference type="PANTHER" id="PTHR23359">
    <property type="entry name" value="NUCLEOTIDE KINASE"/>
    <property type="match status" value="1"/>
</dbReference>
<dbReference type="Pfam" id="PF00406">
    <property type="entry name" value="ADK"/>
    <property type="match status" value="1"/>
</dbReference>
<dbReference type="Pfam" id="PF05191">
    <property type="entry name" value="ADK_lid"/>
    <property type="match status" value="1"/>
</dbReference>
<dbReference type="PRINTS" id="PR00094">
    <property type="entry name" value="ADENYLTKNASE"/>
</dbReference>
<dbReference type="SUPFAM" id="SSF52540">
    <property type="entry name" value="P-loop containing nucleoside triphosphate hydrolases"/>
    <property type="match status" value="1"/>
</dbReference>
<dbReference type="PROSITE" id="PS00113">
    <property type="entry name" value="ADENYLATE_KINASE"/>
    <property type="match status" value="1"/>
</dbReference>
<gene>
    <name evidence="1" type="primary">adk</name>
    <name type="ordered locus">BcerKBAB4_0126</name>
</gene>
<keyword id="KW-0067">ATP-binding</keyword>
<keyword id="KW-0963">Cytoplasm</keyword>
<keyword id="KW-0418">Kinase</keyword>
<keyword id="KW-0479">Metal-binding</keyword>
<keyword id="KW-0545">Nucleotide biosynthesis</keyword>
<keyword id="KW-0547">Nucleotide-binding</keyword>
<keyword id="KW-0808">Transferase</keyword>
<keyword id="KW-0862">Zinc</keyword>
<comment type="function">
    <text evidence="1">Catalyzes the reversible transfer of the terminal phosphate group between ATP and AMP. Plays an important role in cellular energy homeostasis and in adenine nucleotide metabolism.</text>
</comment>
<comment type="catalytic activity">
    <reaction evidence="1">
        <text>AMP + ATP = 2 ADP</text>
        <dbReference type="Rhea" id="RHEA:12973"/>
        <dbReference type="ChEBI" id="CHEBI:30616"/>
        <dbReference type="ChEBI" id="CHEBI:456215"/>
        <dbReference type="ChEBI" id="CHEBI:456216"/>
        <dbReference type="EC" id="2.7.4.3"/>
    </reaction>
</comment>
<comment type="pathway">
    <text evidence="1">Purine metabolism; AMP biosynthesis via salvage pathway; AMP from ADP: step 1/1.</text>
</comment>
<comment type="subunit">
    <text evidence="1">Monomer.</text>
</comment>
<comment type="subcellular location">
    <subcellularLocation>
        <location evidence="1">Cytoplasm</location>
    </subcellularLocation>
</comment>
<comment type="domain">
    <text evidence="1">Consists of three domains, a large central CORE domain and two small peripheral domains, NMPbind and LID, which undergo movements during catalysis. The LID domain closes over the site of phosphoryl transfer upon ATP binding. Assembling and dissambling the active center during each catalytic cycle provides an effective means to prevent ATP hydrolysis. Some bacteria have evolved a zinc-coordinating structure that stabilizes the LID domain.</text>
</comment>
<comment type="similarity">
    <text evidence="1">Belongs to the adenylate kinase family.</text>
</comment>
<feature type="chain" id="PRO_1000100529" description="Adenylate kinase">
    <location>
        <begin position="1"/>
        <end position="216"/>
    </location>
</feature>
<feature type="region of interest" description="NMP" evidence="1">
    <location>
        <begin position="30"/>
        <end position="59"/>
    </location>
</feature>
<feature type="region of interest" description="LID" evidence="1">
    <location>
        <begin position="126"/>
        <end position="163"/>
    </location>
</feature>
<feature type="binding site" evidence="1">
    <location>
        <begin position="10"/>
        <end position="15"/>
    </location>
    <ligand>
        <name>ATP</name>
        <dbReference type="ChEBI" id="CHEBI:30616"/>
    </ligand>
</feature>
<feature type="binding site" evidence="1">
    <location>
        <position position="31"/>
    </location>
    <ligand>
        <name>AMP</name>
        <dbReference type="ChEBI" id="CHEBI:456215"/>
    </ligand>
</feature>
<feature type="binding site" evidence="1">
    <location>
        <position position="36"/>
    </location>
    <ligand>
        <name>AMP</name>
        <dbReference type="ChEBI" id="CHEBI:456215"/>
    </ligand>
</feature>
<feature type="binding site" evidence="1">
    <location>
        <begin position="57"/>
        <end position="59"/>
    </location>
    <ligand>
        <name>AMP</name>
        <dbReference type="ChEBI" id="CHEBI:456215"/>
    </ligand>
</feature>
<feature type="binding site" evidence="1">
    <location>
        <begin position="85"/>
        <end position="88"/>
    </location>
    <ligand>
        <name>AMP</name>
        <dbReference type="ChEBI" id="CHEBI:456215"/>
    </ligand>
</feature>
<feature type="binding site" evidence="1">
    <location>
        <position position="92"/>
    </location>
    <ligand>
        <name>AMP</name>
        <dbReference type="ChEBI" id="CHEBI:456215"/>
    </ligand>
</feature>
<feature type="binding site" evidence="1">
    <location>
        <position position="127"/>
    </location>
    <ligand>
        <name>ATP</name>
        <dbReference type="ChEBI" id="CHEBI:30616"/>
    </ligand>
</feature>
<feature type="binding site" evidence="1">
    <location>
        <position position="130"/>
    </location>
    <ligand>
        <name>Zn(2+)</name>
        <dbReference type="ChEBI" id="CHEBI:29105"/>
        <note>structural</note>
    </ligand>
</feature>
<feature type="binding site" evidence="1">
    <location>
        <position position="133"/>
    </location>
    <ligand>
        <name>Zn(2+)</name>
        <dbReference type="ChEBI" id="CHEBI:29105"/>
        <note>structural</note>
    </ligand>
</feature>
<feature type="binding site" evidence="1">
    <location>
        <begin position="136"/>
        <end position="137"/>
    </location>
    <ligand>
        <name>ATP</name>
        <dbReference type="ChEBI" id="CHEBI:30616"/>
    </ligand>
</feature>
<feature type="binding site" evidence="1">
    <location>
        <position position="150"/>
    </location>
    <ligand>
        <name>Zn(2+)</name>
        <dbReference type="ChEBI" id="CHEBI:29105"/>
        <note>structural</note>
    </ligand>
</feature>
<feature type="binding site" evidence="1">
    <location>
        <position position="153"/>
    </location>
    <ligand>
        <name>Zn(2+)</name>
        <dbReference type="ChEBI" id="CHEBI:29105"/>
        <note>structural</note>
    </ligand>
</feature>
<feature type="binding site" evidence="1">
    <location>
        <position position="160"/>
    </location>
    <ligand>
        <name>AMP</name>
        <dbReference type="ChEBI" id="CHEBI:456215"/>
    </ligand>
</feature>
<feature type="binding site" evidence="1">
    <location>
        <position position="171"/>
    </location>
    <ligand>
        <name>AMP</name>
        <dbReference type="ChEBI" id="CHEBI:456215"/>
    </ligand>
</feature>
<feature type="binding site" evidence="1">
    <location>
        <position position="199"/>
    </location>
    <ligand>
        <name>ATP</name>
        <dbReference type="ChEBI" id="CHEBI:30616"/>
    </ligand>
</feature>
<reference key="1">
    <citation type="journal article" date="2008" name="Chem. Biol. Interact.">
        <title>Extending the Bacillus cereus group genomics to putative food-borne pathogens of different toxicity.</title>
        <authorList>
            <person name="Lapidus A."/>
            <person name="Goltsman E."/>
            <person name="Auger S."/>
            <person name="Galleron N."/>
            <person name="Segurens B."/>
            <person name="Dossat C."/>
            <person name="Land M.L."/>
            <person name="Broussolle V."/>
            <person name="Brillard J."/>
            <person name="Guinebretiere M.-H."/>
            <person name="Sanchis V."/>
            <person name="Nguen-the C."/>
            <person name="Lereclus D."/>
            <person name="Richardson P."/>
            <person name="Wincker P."/>
            <person name="Weissenbach J."/>
            <person name="Ehrlich S.D."/>
            <person name="Sorokin A."/>
        </authorList>
    </citation>
    <scope>NUCLEOTIDE SEQUENCE [LARGE SCALE GENOMIC DNA]</scope>
    <source>
        <strain>KBAB4</strain>
    </source>
</reference>